<comment type="function">
    <text>May be involved in transcriptional regulation.</text>
</comment>
<comment type="interaction">
    <interactant intactId="EBI-4395732">
        <id>P0C7X2</id>
    </interactant>
    <interactant intactId="EBI-11096309">
        <id>Q9NYB9-2</id>
        <label>ABI2</label>
    </interactant>
    <organismsDiffer>false</organismsDiffer>
    <experiments>3</experiments>
</comment>
<comment type="interaction">
    <interactant intactId="EBI-4395732">
        <id>P0C7X2</id>
    </interactant>
    <interactant intactId="EBI-8643161">
        <id>Q9NX04</id>
        <label>AIRIM</label>
    </interactant>
    <organismsDiffer>false</organismsDiffer>
    <experiments>3</experiments>
</comment>
<comment type="interaction">
    <interactant intactId="EBI-4395732">
        <id>P0C7X2</id>
    </interactant>
    <interactant intactId="EBI-17183751">
        <id>X5D778</id>
        <label>ANKRD11</label>
    </interactant>
    <organismsDiffer>false</organismsDiffer>
    <experiments>3</experiments>
</comment>
<comment type="interaction">
    <interactant intactId="EBI-4395732">
        <id>P0C7X2</id>
    </interactant>
    <interactant intactId="EBI-12006120">
        <id>A0A087WZT3</id>
        <label>BOLA2-SMG1P6</label>
    </interactant>
    <organismsDiffer>false</organismsDiffer>
    <experiments>3</experiments>
</comment>
<comment type="interaction">
    <interactant intactId="EBI-4395732">
        <id>P0C7X2</id>
    </interactant>
    <interactant intactId="EBI-11530605">
        <id>Q9H257-2</id>
        <label>CARD9</label>
    </interactant>
    <organismsDiffer>false</organismsDiffer>
    <experiments>3</experiments>
</comment>
<comment type="interaction">
    <interactant intactId="EBI-4395732">
        <id>P0C7X2</id>
    </interactant>
    <interactant intactId="EBI-744545">
        <id>Q8NEC5</id>
        <label>CATSPER1</label>
    </interactant>
    <organismsDiffer>false</organismsDiffer>
    <experiments>3</experiments>
</comment>
<comment type="interaction">
    <interactant intactId="EBI-4395732">
        <id>P0C7X2</id>
    </interactant>
    <interactant intactId="EBI-10171570">
        <id>Q68D86</id>
        <label>CCDC102B</label>
    </interactant>
    <organismsDiffer>false</organismsDiffer>
    <experiments>3</experiments>
</comment>
<comment type="interaction">
    <interactant intactId="EBI-4395732">
        <id>P0C7X2</id>
    </interactant>
    <interactant intactId="EBI-395261">
        <id>P24863</id>
        <label>CCNC</label>
    </interactant>
    <organismsDiffer>false</organismsDiffer>
    <experiments>3</experiments>
</comment>
<comment type="interaction">
    <interactant intactId="EBI-4395732">
        <id>P0C7X2</id>
    </interactant>
    <interactant intactId="EBI-745859">
        <id>P55273</id>
        <label>CDKN2D</label>
    </interactant>
    <organismsDiffer>false</organismsDiffer>
    <experiments>3</experiments>
</comment>
<comment type="interaction">
    <interactant intactId="EBI-4395732">
        <id>P0C7X2</id>
    </interactant>
    <interactant intactId="EBI-11063830">
        <id>Q86X02</id>
        <label>CDR2L</label>
    </interactant>
    <organismsDiffer>false</organismsDiffer>
    <experiments>3</experiments>
</comment>
<comment type="interaction">
    <interactant intactId="EBI-4395732">
        <id>P0C7X2</id>
    </interactant>
    <interactant intactId="EBI-10292696">
        <id>Q96Q77</id>
        <label>CIB3</label>
    </interactant>
    <organismsDiffer>false</organismsDiffer>
    <experiments>3</experiments>
</comment>
<comment type="interaction">
    <interactant intactId="EBI-4395732">
        <id>P0C7X2</id>
    </interactant>
    <interactant intactId="EBI-745369">
        <id>Q9H4E7</id>
        <label>DEF6</label>
    </interactant>
    <organismsDiffer>false</organismsDiffer>
    <experiments>3</experiments>
</comment>
<comment type="interaction">
    <interactant intactId="EBI-4395732">
        <id>P0C7X2</id>
    </interactant>
    <interactant intactId="EBI-6658203">
        <id>Q86YD7</id>
        <label>FAM90A1</label>
    </interactant>
    <organismsDiffer>false</organismsDiffer>
    <experiments>3</experiments>
</comment>
<comment type="interaction">
    <interactant intactId="EBI-4395732">
        <id>P0C7X2</id>
    </interactant>
    <interactant intactId="EBI-744104">
        <id>P55040</id>
        <label>GEM</label>
    </interactant>
    <organismsDiffer>false</organismsDiffer>
    <experiments>3</experiments>
</comment>
<comment type="interaction">
    <interactant intactId="EBI-4395732">
        <id>P0C7X2</id>
    </interactant>
    <interactant intactId="EBI-748515">
        <id>Q8IVS8</id>
        <label>GLYCTK</label>
    </interactant>
    <organismsDiffer>false</organismsDiffer>
    <experiments>3</experiments>
</comment>
<comment type="interaction">
    <interactant intactId="EBI-4395732">
        <id>P0C7X2</id>
    </interactant>
    <interactant intactId="EBI-751540">
        <id>O95872</id>
        <label>GPANK1</label>
    </interactant>
    <organismsDiffer>false</organismsDiffer>
    <experiments>3</experiments>
</comment>
<comment type="interaction">
    <interactant intactId="EBI-4395732">
        <id>P0C7X2</id>
    </interactant>
    <interactant intactId="EBI-740785">
        <id>P49639</id>
        <label>HOXA1</label>
    </interactant>
    <organismsDiffer>false</organismsDiffer>
    <experiments>3</experiments>
</comment>
<comment type="interaction">
    <interactant intactId="EBI-4395732">
        <id>P0C7X2</id>
    </interactant>
    <interactant intactId="EBI-7116203">
        <id>O75031</id>
        <label>HSF2BP</label>
    </interactant>
    <organismsDiffer>false</organismsDiffer>
    <experiments>3</experiments>
</comment>
<comment type="interaction">
    <interactant intactId="EBI-4395732">
        <id>P0C7X2</id>
    </interactant>
    <interactant intactId="EBI-11955401">
        <id>Q86VF2-5</id>
        <label>IGFN1</label>
    </interactant>
    <organismsDiffer>false</organismsDiffer>
    <experiments>3</experiments>
</comment>
<comment type="interaction">
    <interactant intactId="EBI-4395732">
        <id>P0C7X2</id>
    </interactant>
    <interactant intactId="EBI-8639312">
        <id>P25800</id>
        <label>LMO1</label>
    </interactant>
    <organismsDiffer>false</organismsDiffer>
    <experiments>3</experiments>
</comment>
<comment type="interaction">
    <interactant intactId="EBI-4395732">
        <id>P0C7X2</id>
    </interactant>
    <interactant intactId="EBI-11959475">
        <id>P25791-3</id>
        <label>LMO2</label>
    </interactant>
    <organismsDiffer>false</organismsDiffer>
    <experiments>3</experiments>
</comment>
<comment type="interaction">
    <interactant intactId="EBI-4395732">
        <id>P0C7X2</id>
    </interactant>
    <interactant intactId="EBI-2340269">
        <id>Q13064</id>
        <label>MKRN3</label>
    </interactant>
    <organismsDiffer>false</organismsDiffer>
    <experiments>3</experiments>
</comment>
<comment type="interaction">
    <interactant intactId="EBI-4395732">
        <id>P0C7X2</id>
    </interactant>
    <interactant intactId="EBI-5662487">
        <id>Q8TDC0</id>
        <label>MYOZ3</label>
    </interactant>
    <organismsDiffer>false</organismsDiffer>
    <experiments>3</experiments>
</comment>
<comment type="interaction">
    <interactant intactId="EBI-4395732">
        <id>P0C7X2</id>
    </interactant>
    <interactant intactId="EBI-713635">
        <id>O43639</id>
        <label>NCK2</label>
    </interactant>
    <organismsDiffer>false</organismsDiffer>
    <experiments>3</experiments>
</comment>
<comment type="interaction">
    <interactant intactId="EBI-4395732">
        <id>P0C7X2</id>
    </interactant>
    <interactant intactId="EBI-11750983">
        <id>Q9HC98-4</id>
        <label>NEK6</label>
    </interactant>
    <organismsDiffer>false</organismsDiffer>
    <experiments>3</experiments>
</comment>
<comment type="interaction">
    <interactant intactId="EBI-4395732">
        <id>P0C7X2</id>
    </interactant>
    <interactant intactId="EBI-725252">
        <id>Q9UMS0</id>
        <label>NFU1</label>
    </interactant>
    <organismsDiffer>false</organismsDiffer>
    <experiments>3</experiments>
</comment>
<comment type="interaction">
    <interactant intactId="EBI-4395732">
        <id>P0C7X2</id>
    </interactant>
    <interactant intactId="EBI-709807">
        <id>P16118</id>
        <label>PFKFB1</label>
    </interactant>
    <organismsDiffer>false</organismsDiffer>
    <experiments>3</experiments>
</comment>
<comment type="interaction">
    <interactant intactId="EBI-4395732">
        <id>P0C7X2</id>
    </interactant>
    <interactant intactId="EBI-530034">
        <id>O43189</id>
        <label>PHF1</label>
    </interactant>
    <organismsDiffer>false</organismsDiffer>
    <experiments>3</experiments>
</comment>
<comment type="interaction">
    <interactant intactId="EBI-4395732">
        <id>P0C7X2</id>
    </interactant>
    <interactant intactId="EBI-10232538">
        <id>Q8WWB5</id>
        <label>PIH1D2</label>
    </interactant>
    <organismsDiffer>false</organismsDiffer>
    <experiments>3</experiments>
</comment>
<comment type="interaction">
    <interactant intactId="EBI-4395732">
        <id>P0C7X2</id>
    </interactant>
    <interactant intactId="EBI-1055079">
        <id>O15160</id>
        <label>POLR1C</label>
    </interactant>
    <organismsDiffer>false</organismsDiffer>
    <experiments>3</experiments>
</comment>
<comment type="interaction">
    <interactant intactId="EBI-4395732">
        <id>P0C7X2</id>
    </interactant>
    <interactant intactId="EBI-372273">
        <id>P20618</id>
        <label>PSMB1</label>
    </interactant>
    <organismsDiffer>false</organismsDiffer>
    <experiments>3</experiments>
</comment>
<comment type="interaction">
    <interactant intactId="EBI-4395732">
        <id>P0C7X2</id>
    </interactant>
    <interactant intactId="EBI-1504830">
        <id>Q9P2K3-2</id>
        <label>RCOR3</label>
    </interactant>
    <organismsDiffer>false</organismsDiffer>
    <experiments>3</experiments>
</comment>
<comment type="interaction">
    <interactant intactId="EBI-4395732">
        <id>P0C7X2</id>
    </interactant>
    <interactant intactId="EBI-748391">
        <id>Q9BWG6</id>
        <label>SCNM1</label>
    </interactant>
    <organismsDiffer>false</organismsDiffer>
    <experiments>3</experiments>
</comment>
<comment type="interaction">
    <interactant intactId="EBI-4395732">
        <id>P0C7X2</id>
    </interactant>
    <interactant intactId="EBI-358436">
        <id>Q12824-2</id>
        <label>SMARCB1</label>
    </interactant>
    <organismsDiffer>false</organismsDiffer>
    <experiments>3</experiments>
</comment>
<comment type="interaction">
    <interactant intactId="EBI-4395732">
        <id>P0C7X2</id>
    </interactant>
    <interactant intactId="EBI-11955057">
        <id>Q8N8B7-2</id>
        <label>TCEANC</label>
    </interactant>
    <organismsDiffer>false</organismsDiffer>
    <experiments>3</experiments>
</comment>
<comment type="interaction">
    <interactant intactId="EBI-4395732">
        <id>P0C7X2</id>
    </interactant>
    <interactant intactId="EBI-17721485">
        <id>Q8WWU5-7</id>
        <label>TCP11</label>
    </interactant>
    <organismsDiffer>false</organismsDiffer>
    <experiments>3</experiments>
</comment>
<comment type="interaction">
    <interactant intactId="EBI-4395732">
        <id>P0C7X2</id>
    </interactant>
    <interactant intactId="EBI-750487">
        <id>Q8WW24</id>
        <label>TEKT4</label>
    </interactant>
    <organismsDiffer>false</organismsDiffer>
    <experiments>3</experiments>
</comment>
<comment type="interaction">
    <interactant intactId="EBI-4395732">
        <id>P0C7X2</id>
    </interactant>
    <interactant intactId="EBI-752030">
        <id>Q96A09</id>
        <label>TENT5B</label>
    </interactant>
    <organismsDiffer>false</organismsDiffer>
    <experiments>3</experiments>
</comment>
<comment type="interaction">
    <interactant intactId="EBI-4395732">
        <id>P0C7X2</id>
    </interactant>
    <interactant intactId="EBI-11741437">
        <id>Q08117-2</id>
        <label>TLE5</label>
    </interactant>
    <organismsDiffer>false</organismsDiffer>
    <experiments>3</experiments>
</comment>
<comment type="interaction">
    <interactant intactId="EBI-4395732">
        <id>P0C7X2</id>
    </interactant>
    <interactant intactId="EBI-948354">
        <id>Q6DKK2</id>
        <label>TTC19</label>
    </interactant>
    <organismsDiffer>false</organismsDiffer>
    <experiments>3</experiments>
</comment>
<comment type="interaction">
    <interactant intactId="EBI-4395732">
        <id>P0C7X2</id>
    </interactant>
    <interactant intactId="EBI-10183064">
        <id>Q8N5A5-2</id>
        <label>ZGPAT</label>
    </interactant>
    <organismsDiffer>false</organismsDiffer>
    <experiments>3</experiments>
</comment>
<comment type="interaction">
    <interactant intactId="EBI-4395732">
        <id>P0C7X2</id>
    </interactant>
    <interactant intactId="EBI-373456">
        <id>Q9Y3S2</id>
        <label>ZNF330</label>
    </interactant>
    <organismsDiffer>false</organismsDiffer>
    <experiments>3</experiments>
</comment>
<comment type="subcellular location">
    <subcellularLocation>
        <location evidence="5">Nucleus</location>
    </subcellularLocation>
</comment>
<comment type="alternative products">
    <event type="alternative splicing"/>
    <isoform>
        <id>P0C7X2-1</id>
        <name>1</name>
        <sequence type="displayed"/>
    </isoform>
    <isoform>
        <id>P0C7X2-5</id>
        <name>2</name>
        <sequence type="described" ref="VSP_046955"/>
    </isoform>
</comment>
<comment type="similarity">
    <text evidence="5">Belongs to the krueppel C2H2-type zinc-finger protein family.</text>
</comment>
<comment type="sequence caution" evidence="5">
    <conflict type="erroneous gene model prediction">
        <sequence resource="EMBL-CDS" id="AAC31673"/>
    </conflict>
    <text>The predicted gene has been split into 2 genes: ZNF688 and ZNF785.</text>
</comment>
<proteinExistence type="evidence at protein level"/>
<organism>
    <name type="scientific">Homo sapiens</name>
    <name type="common">Human</name>
    <dbReference type="NCBI Taxonomy" id="9606"/>
    <lineage>
        <taxon>Eukaryota</taxon>
        <taxon>Metazoa</taxon>
        <taxon>Chordata</taxon>
        <taxon>Craniata</taxon>
        <taxon>Vertebrata</taxon>
        <taxon>Euteleostomi</taxon>
        <taxon>Mammalia</taxon>
        <taxon>Eutheria</taxon>
        <taxon>Euarchontoglires</taxon>
        <taxon>Primates</taxon>
        <taxon>Haplorrhini</taxon>
        <taxon>Catarrhini</taxon>
        <taxon>Hominidae</taxon>
        <taxon>Homo</taxon>
    </lineage>
</organism>
<dbReference type="EMBL" id="AK122680">
    <property type="protein sequence ID" value="BAG53663.1"/>
    <property type="molecule type" value="mRNA"/>
</dbReference>
<dbReference type="EMBL" id="AC002310">
    <property type="protein sequence ID" value="AAC31673.1"/>
    <property type="status" value="ALT_SEQ"/>
    <property type="molecule type" value="Genomic_DNA"/>
</dbReference>
<dbReference type="EMBL" id="CH471192">
    <property type="protein sequence ID" value="EAW52233.1"/>
    <property type="molecule type" value="Genomic_DNA"/>
</dbReference>
<dbReference type="EMBL" id="CH471192">
    <property type="protein sequence ID" value="EAW52235.1"/>
    <property type="molecule type" value="Genomic_DNA"/>
</dbReference>
<dbReference type="EMBL" id="BC018997">
    <property type="protein sequence ID" value="AAH18997.1"/>
    <property type="molecule type" value="mRNA"/>
</dbReference>
<dbReference type="EMBL" id="BM011208">
    <property type="status" value="NOT_ANNOTATED_CDS"/>
    <property type="molecule type" value="mRNA"/>
</dbReference>
<dbReference type="CCDS" id="CCDS10684.1">
    <molecule id="P0C7X2-1"/>
</dbReference>
<dbReference type="CCDS" id="CCDS42151.1">
    <molecule id="P0C7X2-5"/>
</dbReference>
<dbReference type="RefSeq" id="NP_001019854.1">
    <molecule id="P0C7X2-5"/>
    <property type="nucleotide sequence ID" value="NM_001024683.2"/>
</dbReference>
<dbReference type="RefSeq" id="NP_660314.1">
    <molecule id="P0C7X2-1"/>
    <property type="nucleotide sequence ID" value="NM_145271.4"/>
</dbReference>
<dbReference type="RefSeq" id="XP_047289610.1">
    <molecule id="P0C7X2-5"/>
    <property type="nucleotide sequence ID" value="XM_047433654.1"/>
</dbReference>
<dbReference type="RefSeq" id="XP_054235656.1">
    <molecule id="P0C7X2-5"/>
    <property type="nucleotide sequence ID" value="XM_054379681.1"/>
</dbReference>
<dbReference type="SMR" id="P0C7X2"/>
<dbReference type="BioGRID" id="126996">
    <property type="interactions" value="116"/>
</dbReference>
<dbReference type="FunCoup" id="P0C7X2">
    <property type="interactions" value="23"/>
</dbReference>
<dbReference type="IntAct" id="P0C7X2">
    <property type="interactions" value="47"/>
</dbReference>
<dbReference type="STRING" id="9606.ENSP00000223459"/>
<dbReference type="iPTMnet" id="P0C7X2"/>
<dbReference type="PhosphoSitePlus" id="P0C7X2"/>
<dbReference type="BioMuta" id="ZNF688"/>
<dbReference type="DMDM" id="205636136"/>
<dbReference type="jPOST" id="P0C7X2"/>
<dbReference type="MassIVE" id="P0C7X2"/>
<dbReference type="PaxDb" id="9606-ENSP00000223459"/>
<dbReference type="PeptideAtlas" id="P0C7X2"/>
<dbReference type="ProteomicsDB" id="2151"/>
<dbReference type="ProteomicsDB" id="52386">
    <molecule id="P0C7X2-1"/>
</dbReference>
<dbReference type="Antibodypedia" id="27350">
    <property type="antibodies" value="149 antibodies from 19 providers"/>
</dbReference>
<dbReference type="DNASU" id="146542"/>
<dbReference type="Ensembl" id="ENST00000223459.11">
    <molecule id="P0C7X2-1"/>
    <property type="protein sequence ID" value="ENSP00000223459.6"/>
    <property type="gene ID" value="ENSG00000229809.9"/>
</dbReference>
<dbReference type="Ensembl" id="ENST00000563276.5">
    <molecule id="P0C7X2-5"/>
    <property type="protein sequence ID" value="ENSP00000455227.2"/>
    <property type="gene ID" value="ENSG00000229809.9"/>
</dbReference>
<dbReference type="GeneID" id="146542"/>
<dbReference type="KEGG" id="hsa:146542"/>
<dbReference type="MANE-Select" id="ENST00000223459.11">
    <property type="protein sequence ID" value="ENSP00000223459.6"/>
    <property type="RefSeq nucleotide sequence ID" value="NM_145271.4"/>
    <property type="RefSeq protein sequence ID" value="NP_660314.1"/>
</dbReference>
<dbReference type="UCSC" id="uc002dyt.4">
    <molecule id="P0C7X2-1"/>
    <property type="organism name" value="human"/>
</dbReference>
<dbReference type="AGR" id="HGNC:30489"/>
<dbReference type="CTD" id="146542"/>
<dbReference type="DisGeNET" id="146542"/>
<dbReference type="GeneCards" id="ZNF688"/>
<dbReference type="HGNC" id="HGNC:30489">
    <property type="gene designation" value="ZNF688"/>
</dbReference>
<dbReference type="HPA" id="ENSG00000229809">
    <property type="expression patterns" value="Low tissue specificity"/>
</dbReference>
<dbReference type="neXtProt" id="NX_P0C7X2"/>
<dbReference type="OpenTargets" id="ENSG00000229809"/>
<dbReference type="PharmGKB" id="PA142670487"/>
<dbReference type="VEuPathDB" id="HostDB:ENSG00000229809"/>
<dbReference type="eggNOG" id="KOG1721">
    <property type="taxonomic scope" value="Eukaryota"/>
</dbReference>
<dbReference type="GeneTree" id="ENSGT00940000162549"/>
<dbReference type="HOGENOM" id="CLU_002678_13_2_1"/>
<dbReference type="InParanoid" id="P0C7X2"/>
<dbReference type="OMA" id="WMEQENE"/>
<dbReference type="OrthoDB" id="9892686at2759"/>
<dbReference type="PAN-GO" id="P0C7X2">
    <property type="GO annotations" value="3 GO annotations based on evolutionary models"/>
</dbReference>
<dbReference type="PhylomeDB" id="P0C7X2"/>
<dbReference type="TreeFam" id="TF339643"/>
<dbReference type="PathwayCommons" id="P0C7X2"/>
<dbReference type="Reactome" id="R-HSA-212436">
    <property type="pathway name" value="Generic Transcription Pathway"/>
</dbReference>
<dbReference type="SignaLink" id="P0C7X2"/>
<dbReference type="BioGRID-ORCS" id="146542">
    <property type="hits" value="7 hits in 1176 CRISPR screens"/>
</dbReference>
<dbReference type="CD-CODE" id="804901D1">
    <property type="entry name" value="Nuclear speckle"/>
</dbReference>
<dbReference type="ChiTaRS" id="ZNF688">
    <property type="organism name" value="human"/>
</dbReference>
<dbReference type="GenomeRNAi" id="146542"/>
<dbReference type="Pharos" id="P0C7X2">
    <property type="development level" value="Tdark"/>
</dbReference>
<dbReference type="PRO" id="PR:P0C7X2"/>
<dbReference type="Proteomes" id="UP000005640">
    <property type="component" value="Chromosome 16"/>
</dbReference>
<dbReference type="RNAct" id="P0C7X2">
    <property type="molecule type" value="protein"/>
</dbReference>
<dbReference type="Bgee" id="ENSG00000229809">
    <property type="expression patterns" value="Expressed in sural nerve and 192 other cell types or tissues"/>
</dbReference>
<dbReference type="ExpressionAtlas" id="P0C7X2">
    <property type="expression patterns" value="baseline and differential"/>
</dbReference>
<dbReference type="GO" id="GO:0005634">
    <property type="term" value="C:nucleus"/>
    <property type="evidence" value="ECO:0007669"/>
    <property type="project" value="UniProtKB-SubCell"/>
</dbReference>
<dbReference type="GO" id="GO:0003677">
    <property type="term" value="F:DNA binding"/>
    <property type="evidence" value="ECO:0007669"/>
    <property type="project" value="UniProtKB-KW"/>
</dbReference>
<dbReference type="GO" id="GO:0003700">
    <property type="term" value="F:DNA-binding transcription factor activity"/>
    <property type="evidence" value="ECO:0000303"/>
    <property type="project" value="ARUK-UCL"/>
</dbReference>
<dbReference type="GO" id="GO:0008270">
    <property type="term" value="F:zinc ion binding"/>
    <property type="evidence" value="ECO:0007669"/>
    <property type="project" value="UniProtKB-KW"/>
</dbReference>
<dbReference type="CDD" id="cd07765">
    <property type="entry name" value="KRAB_A-box"/>
    <property type="match status" value="1"/>
</dbReference>
<dbReference type="FunFam" id="3.30.160.60:FF:000100">
    <property type="entry name" value="Zinc finger 45-like"/>
    <property type="match status" value="1"/>
</dbReference>
<dbReference type="FunFam" id="3.30.160.60:FF:000180">
    <property type="entry name" value="Zinc finger protein 689"/>
    <property type="match status" value="1"/>
</dbReference>
<dbReference type="Gene3D" id="6.10.140.140">
    <property type="match status" value="1"/>
</dbReference>
<dbReference type="Gene3D" id="3.30.160.60">
    <property type="entry name" value="Classic Zinc Finger"/>
    <property type="match status" value="2"/>
</dbReference>
<dbReference type="InterPro" id="IPR001909">
    <property type="entry name" value="KRAB"/>
</dbReference>
<dbReference type="InterPro" id="IPR036051">
    <property type="entry name" value="KRAB_dom_sf"/>
</dbReference>
<dbReference type="InterPro" id="IPR050169">
    <property type="entry name" value="Krueppel_C2H2_ZnF"/>
</dbReference>
<dbReference type="InterPro" id="IPR036236">
    <property type="entry name" value="Znf_C2H2_sf"/>
</dbReference>
<dbReference type="InterPro" id="IPR013087">
    <property type="entry name" value="Znf_C2H2_type"/>
</dbReference>
<dbReference type="PANTHER" id="PTHR23232">
    <property type="entry name" value="KRAB DOMAIN C2H2 ZINC FINGER"/>
    <property type="match status" value="1"/>
</dbReference>
<dbReference type="PANTHER" id="PTHR23232:SF69">
    <property type="entry name" value="ZINC FINGER PROTEIN 688"/>
    <property type="match status" value="1"/>
</dbReference>
<dbReference type="Pfam" id="PF01352">
    <property type="entry name" value="KRAB"/>
    <property type="match status" value="1"/>
</dbReference>
<dbReference type="Pfam" id="PF00096">
    <property type="entry name" value="zf-C2H2"/>
    <property type="match status" value="2"/>
</dbReference>
<dbReference type="SMART" id="SM00349">
    <property type="entry name" value="KRAB"/>
    <property type="match status" value="1"/>
</dbReference>
<dbReference type="SMART" id="SM00355">
    <property type="entry name" value="ZnF_C2H2"/>
    <property type="match status" value="2"/>
</dbReference>
<dbReference type="SUPFAM" id="SSF57667">
    <property type="entry name" value="beta-beta-alpha zinc fingers"/>
    <property type="match status" value="1"/>
</dbReference>
<dbReference type="SUPFAM" id="SSF109640">
    <property type="entry name" value="KRAB domain (Kruppel-associated box)"/>
    <property type="match status" value="1"/>
</dbReference>
<dbReference type="PROSITE" id="PS50805">
    <property type="entry name" value="KRAB"/>
    <property type="match status" value="1"/>
</dbReference>
<dbReference type="PROSITE" id="PS00028">
    <property type="entry name" value="ZINC_FINGER_C2H2_1"/>
    <property type="match status" value="2"/>
</dbReference>
<dbReference type="PROSITE" id="PS50157">
    <property type="entry name" value="ZINC_FINGER_C2H2_2"/>
    <property type="match status" value="2"/>
</dbReference>
<evidence type="ECO:0000255" key="1">
    <source>
        <dbReference type="PROSITE-ProRule" id="PRU00042"/>
    </source>
</evidence>
<evidence type="ECO:0000255" key="2">
    <source>
        <dbReference type="PROSITE-ProRule" id="PRU00119"/>
    </source>
</evidence>
<evidence type="ECO:0000256" key="3">
    <source>
        <dbReference type="SAM" id="MobiDB-lite"/>
    </source>
</evidence>
<evidence type="ECO:0000303" key="4">
    <source ref="5"/>
</evidence>
<evidence type="ECO:0000305" key="5"/>
<gene>
    <name type="primary">ZNF688</name>
</gene>
<accession>P0C7X2</accession>
<accession>A8MV39</accession>
<accession>B3KV51</accession>
<accession>O75701</accession>
<accession>Q8IW91</accession>
<accession>Q8WV14</accession>
<accession>Q96MN0</accession>
<sequence length="276" mass="30575">MAPPPAPLLAPRPGETRPGCRKPGTVSFADVAVYFSPEEWGCLRPAQRALYRDVMQETYGHLGALGFPGPKPALISWMEQESEAWSPAAQDPEKGERLGGARRGDVPNRKEEEPEEVPRAKGPRKAPVKESPEVLVERNPDPAISVAPARAQPPKNAAWDPTTGAQPPAPIPSMDAQAGQRRHVCTDCGRRFTYPSLLVSHRRMHSGERPFPCPECGMRFKRKFAVEAHQWIHRSCSGGRRGRRPGIRAVPRAPVRGDRDPPVLFRHYPDIFEECG</sequence>
<name>ZN688_HUMAN</name>
<protein>
    <recommendedName>
        <fullName>Zinc finger protein 688</fullName>
    </recommendedName>
</protein>
<feature type="chain" id="PRO_0000234007" description="Zinc finger protein 688">
    <location>
        <begin position="1"/>
        <end position="276"/>
    </location>
</feature>
<feature type="domain" description="KRAB" evidence="2">
    <location>
        <begin position="26"/>
        <end position="97"/>
    </location>
</feature>
<feature type="zinc finger region" description="C2H2-type 1" evidence="1">
    <location>
        <begin position="183"/>
        <end position="205"/>
    </location>
</feature>
<feature type="zinc finger region" description="C2H2-type 2" evidence="1">
    <location>
        <begin position="211"/>
        <end position="233"/>
    </location>
</feature>
<feature type="region of interest" description="Disordered" evidence="3">
    <location>
        <begin position="1"/>
        <end position="22"/>
    </location>
</feature>
<feature type="region of interest" description="Disordered" evidence="3">
    <location>
        <begin position="80"/>
        <end position="170"/>
    </location>
</feature>
<feature type="region of interest" description="Disordered" evidence="3">
    <location>
        <begin position="236"/>
        <end position="255"/>
    </location>
</feature>
<feature type="compositionally biased region" description="Pro residues" evidence="3">
    <location>
        <begin position="1"/>
        <end position="10"/>
    </location>
</feature>
<feature type="compositionally biased region" description="Basic and acidic residues" evidence="3">
    <location>
        <begin position="91"/>
        <end position="119"/>
    </location>
</feature>
<feature type="compositionally biased region" description="Basic and acidic residues" evidence="3">
    <location>
        <begin position="127"/>
        <end position="140"/>
    </location>
</feature>
<feature type="splice variant" id="VSP_046955" description="In isoform 2." evidence="4">
    <original>MAPPPAPLLAPRPGETRPGCRKPGTVSFADVAVYFSPEEWGCLRPAQRALYRDVMQETYGHLGAL</original>
    <variation>MPRSPLRSSLSTEASGPRGPFKCPASPRPITAQLLPGSSPIIGRCVLRVQR</variation>
    <location>
        <begin position="1"/>
        <end position="65"/>
    </location>
</feature>
<feature type="sequence variant" id="VAR_052896" description="In dbSNP:rs33997546.">
    <original>S</original>
    <variation>I</variation>
    <location>
        <position position="131"/>
    </location>
</feature>
<feature type="sequence conflict" description="In Ref. 5; BM011208." evidence="5" ref="5">
    <original>P</original>
    <variation>A</variation>
    <location>
        <position position="153"/>
    </location>
</feature>
<feature type="sequence conflict" description="In Ref. 5; BM011208." evidence="5" ref="5">
    <original>T</original>
    <variation>S</variation>
    <location>
        <position position="193"/>
    </location>
</feature>
<reference key="1">
    <citation type="journal article" date="2004" name="Nat. Genet.">
        <title>Complete sequencing and characterization of 21,243 full-length human cDNAs.</title>
        <authorList>
            <person name="Ota T."/>
            <person name="Suzuki Y."/>
            <person name="Nishikawa T."/>
            <person name="Otsuki T."/>
            <person name="Sugiyama T."/>
            <person name="Irie R."/>
            <person name="Wakamatsu A."/>
            <person name="Hayashi K."/>
            <person name="Sato H."/>
            <person name="Nagai K."/>
            <person name="Kimura K."/>
            <person name="Makita H."/>
            <person name="Sekine M."/>
            <person name="Obayashi M."/>
            <person name="Nishi T."/>
            <person name="Shibahara T."/>
            <person name="Tanaka T."/>
            <person name="Ishii S."/>
            <person name="Yamamoto J."/>
            <person name="Saito K."/>
            <person name="Kawai Y."/>
            <person name="Isono Y."/>
            <person name="Nakamura Y."/>
            <person name="Nagahari K."/>
            <person name="Murakami K."/>
            <person name="Yasuda T."/>
            <person name="Iwayanagi T."/>
            <person name="Wagatsuma M."/>
            <person name="Shiratori A."/>
            <person name="Sudo H."/>
            <person name="Hosoiri T."/>
            <person name="Kaku Y."/>
            <person name="Kodaira H."/>
            <person name="Kondo H."/>
            <person name="Sugawara M."/>
            <person name="Takahashi M."/>
            <person name="Kanda K."/>
            <person name="Yokoi T."/>
            <person name="Furuya T."/>
            <person name="Kikkawa E."/>
            <person name="Omura Y."/>
            <person name="Abe K."/>
            <person name="Kamihara K."/>
            <person name="Katsuta N."/>
            <person name="Sato K."/>
            <person name="Tanikawa M."/>
            <person name="Yamazaki M."/>
            <person name="Ninomiya K."/>
            <person name="Ishibashi T."/>
            <person name="Yamashita H."/>
            <person name="Murakawa K."/>
            <person name="Fujimori K."/>
            <person name="Tanai H."/>
            <person name="Kimata M."/>
            <person name="Watanabe M."/>
            <person name="Hiraoka S."/>
            <person name="Chiba Y."/>
            <person name="Ishida S."/>
            <person name="Ono Y."/>
            <person name="Takiguchi S."/>
            <person name="Watanabe S."/>
            <person name="Yosida M."/>
            <person name="Hotuta T."/>
            <person name="Kusano J."/>
            <person name="Kanehori K."/>
            <person name="Takahashi-Fujii A."/>
            <person name="Hara H."/>
            <person name="Tanase T.-O."/>
            <person name="Nomura Y."/>
            <person name="Togiya S."/>
            <person name="Komai F."/>
            <person name="Hara R."/>
            <person name="Takeuchi K."/>
            <person name="Arita M."/>
            <person name="Imose N."/>
            <person name="Musashino K."/>
            <person name="Yuuki H."/>
            <person name="Oshima A."/>
            <person name="Sasaki N."/>
            <person name="Aotsuka S."/>
            <person name="Yoshikawa Y."/>
            <person name="Matsunawa H."/>
            <person name="Ichihara T."/>
            <person name="Shiohata N."/>
            <person name="Sano S."/>
            <person name="Moriya S."/>
            <person name="Momiyama H."/>
            <person name="Satoh N."/>
            <person name="Takami S."/>
            <person name="Terashima Y."/>
            <person name="Suzuki O."/>
            <person name="Nakagawa S."/>
            <person name="Senoh A."/>
            <person name="Mizoguchi H."/>
            <person name="Goto Y."/>
            <person name="Shimizu F."/>
            <person name="Wakebe H."/>
            <person name="Hishigaki H."/>
            <person name="Watanabe T."/>
            <person name="Sugiyama A."/>
            <person name="Takemoto M."/>
            <person name="Kawakami B."/>
            <person name="Yamazaki M."/>
            <person name="Watanabe K."/>
            <person name="Kumagai A."/>
            <person name="Itakura S."/>
            <person name="Fukuzumi Y."/>
            <person name="Fujimori Y."/>
            <person name="Komiyama M."/>
            <person name="Tashiro H."/>
            <person name="Tanigami A."/>
            <person name="Fujiwara T."/>
            <person name="Ono T."/>
            <person name="Yamada K."/>
            <person name="Fujii Y."/>
            <person name="Ozaki K."/>
            <person name="Hirao M."/>
            <person name="Ohmori Y."/>
            <person name="Kawabata A."/>
            <person name="Hikiji T."/>
            <person name="Kobatake N."/>
            <person name="Inagaki H."/>
            <person name="Ikema Y."/>
            <person name="Okamoto S."/>
            <person name="Okitani R."/>
            <person name="Kawakami T."/>
            <person name="Noguchi S."/>
            <person name="Itoh T."/>
            <person name="Shigeta K."/>
            <person name="Senba T."/>
            <person name="Matsumura K."/>
            <person name="Nakajima Y."/>
            <person name="Mizuno T."/>
            <person name="Morinaga M."/>
            <person name="Sasaki M."/>
            <person name="Togashi T."/>
            <person name="Oyama M."/>
            <person name="Hata H."/>
            <person name="Watanabe M."/>
            <person name="Komatsu T."/>
            <person name="Mizushima-Sugano J."/>
            <person name="Satoh T."/>
            <person name="Shirai Y."/>
            <person name="Takahashi Y."/>
            <person name="Nakagawa K."/>
            <person name="Okumura K."/>
            <person name="Nagase T."/>
            <person name="Nomura N."/>
            <person name="Kikuchi H."/>
            <person name="Masuho Y."/>
            <person name="Yamashita R."/>
            <person name="Nakai K."/>
            <person name="Yada T."/>
            <person name="Nakamura Y."/>
            <person name="Ohara O."/>
            <person name="Isogai T."/>
            <person name="Sugano S."/>
        </authorList>
    </citation>
    <scope>NUCLEOTIDE SEQUENCE [LARGE SCALE MRNA] (ISOFORM 1)</scope>
    <source>
        <tissue>Cerebellum</tissue>
    </source>
</reference>
<reference key="2">
    <citation type="journal article" date="1999" name="Genomics">
        <title>Genome duplications and other features in 12 Mb of DNA sequence from human chromosome 16p and 16q.</title>
        <authorList>
            <person name="Loftus B.J."/>
            <person name="Kim U.-J."/>
            <person name="Sneddon V.P."/>
            <person name="Kalush F."/>
            <person name="Brandon R."/>
            <person name="Fuhrmann J."/>
            <person name="Mason T."/>
            <person name="Crosby M.L."/>
            <person name="Barnstead M."/>
            <person name="Cronin L."/>
            <person name="Mays A.D."/>
            <person name="Cao Y."/>
            <person name="Xu R.X."/>
            <person name="Kang H.-L."/>
            <person name="Mitchell S."/>
            <person name="Eichler E.E."/>
            <person name="Harris P.C."/>
            <person name="Venter J.C."/>
            <person name="Adams M.D."/>
        </authorList>
    </citation>
    <scope>NUCLEOTIDE SEQUENCE [LARGE SCALE GENOMIC DNA]</scope>
</reference>
<reference key="3">
    <citation type="submission" date="2005-07" db="EMBL/GenBank/DDBJ databases">
        <authorList>
            <person name="Mural R.J."/>
            <person name="Istrail S."/>
            <person name="Sutton G.G."/>
            <person name="Florea L."/>
            <person name="Halpern A.L."/>
            <person name="Mobarry C.M."/>
            <person name="Lippert R."/>
            <person name="Walenz B."/>
            <person name="Shatkay H."/>
            <person name="Dew I."/>
            <person name="Miller J.R."/>
            <person name="Flanigan M.J."/>
            <person name="Edwards N.J."/>
            <person name="Bolanos R."/>
            <person name="Fasulo D."/>
            <person name="Halldorsson B.V."/>
            <person name="Hannenhalli S."/>
            <person name="Turner R."/>
            <person name="Yooseph S."/>
            <person name="Lu F."/>
            <person name="Nusskern D.R."/>
            <person name="Shue B.C."/>
            <person name="Zheng X.H."/>
            <person name="Zhong F."/>
            <person name="Delcher A.L."/>
            <person name="Huson D.H."/>
            <person name="Kravitz S.A."/>
            <person name="Mouchard L."/>
            <person name="Reinert K."/>
            <person name="Remington K.A."/>
            <person name="Clark A.G."/>
            <person name="Waterman M.S."/>
            <person name="Eichler E.E."/>
            <person name="Adams M.D."/>
            <person name="Hunkapiller M.W."/>
            <person name="Myers E.W."/>
            <person name="Venter J.C."/>
        </authorList>
    </citation>
    <scope>NUCLEOTIDE SEQUENCE [LARGE SCALE GENOMIC DNA]</scope>
</reference>
<reference key="4">
    <citation type="journal article" date="2004" name="Genome Res.">
        <title>The status, quality, and expansion of the NIH full-length cDNA project: the Mammalian Gene Collection (MGC).</title>
        <authorList>
            <consortium name="The MGC Project Team"/>
        </authorList>
    </citation>
    <scope>NUCLEOTIDE SEQUENCE [LARGE SCALE MRNA] (ISOFORM 1)</scope>
    <source>
        <tissue>B-cell</tissue>
        <tissue>Brain</tissue>
    </source>
</reference>
<reference key="5">
    <citation type="submission" date="2001-10" db="EMBL/GenBank/DDBJ databases">
        <authorList>
            <consortium name="The MGC Project Team"/>
        </authorList>
    </citation>
    <scope>NUCLEOTIDE SEQUENCE [LARGE SCALE MRNA] OF 1-215 (ISOFORM 2)</scope>
</reference>
<keyword id="KW-0025">Alternative splicing</keyword>
<keyword id="KW-0238">DNA-binding</keyword>
<keyword id="KW-0479">Metal-binding</keyword>
<keyword id="KW-0539">Nucleus</keyword>
<keyword id="KW-1267">Proteomics identification</keyword>
<keyword id="KW-1185">Reference proteome</keyword>
<keyword id="KW-0677">Repeat</keyword>
<keyword id="KW-0804">Transcription</keyword>
<keyword id="KW-0805">Transcription regulation</keyword>
<keyword id="KW-0862">Zinc</keyword>
<keyword id="KW-0863">Zinc-finger</keyword>